<dbReference type="EMBL" id="CH480818">
    <property type="protein sequence ID" value="EDW52288.1"/>
    <property type="molecule type" value="Genomic_DNA"/>
</dbReference>
<dbReference type="SMR" id="B4HW93"/>
<dbReference type="STRING" id="7238.B4HW93"/>
<dbReference type="EnsemblMetazoa" id="FBtr0195315">
    <property type="protein sequence ID" value="FBpp0193807"/>
    <property type="gene ID" value="FBgn0167267"/>
</dbReference>
<dbReference type="EnsemblMetazoa" id="XM_002036329.2">
    <property type="protein sequence ID" value="XP_002036365.1"/>
    <property type="gene ID" value="LOC6611843"/>
</dbReference>
<dbReference type="GeneID" id="6611843"/>
<dbReference type="KEGG" id="dse:6611843"/>
<dbReference type="HOGENOM" id="CLU_019619_0_0_1"/>
<dbReference type="OMA" id="QKVTWIV"/>
<dbReference type="OrthoDB" id="49545at7215"/>
<dbReference type="PhylomeDB" id="B4HW93"/>
<dbReference type="Proteomes" id="UP000001292">
    <property type="component" value="Unassembled WGS sequence"/>
</dbReference>
<dbReference type="GO" id="GO:0005730">
    <property type="term" value="C:nucleolus"/>
    <property type="evidence" value="ECO:0000250"/>
    <property type="project" value="UniProtKB"/>
</dbReference>
<dbReference type="GO" id="GO:0005654">
    <property type="term" value="C:nucleoplasm"/>
    <property type="evidence" value="ECO:0000250"/>
    <property type="project" value="UniProtKB"/>
</dbReference>
<dbReference type="GO" id="GO:0070545">
    <property type="term" value="C:PeBoW complex"/>
    <property type="evidence" value="ECO:0007669"/>
    <property type="project" value="TreeGrafter"/>
</dbReference>
<dbReference type="GO" id="GO:0030687">
    <property type="term" value="C:preribosome, large subunit precursor"/>
    <property type="evidence" value="ECO:0007669"/>
    <property type="project" value="UniProtKB-UniRule"/>
</dbReference>
<dbReference type="GO" id="GO:0043021">
    <property type="term" value="F:ribonucleoprotein complex binding"/>
    <property type="evidence" value="ECO:0007669"/>
    <property type="project" value="UniProtKB-UniRule"/>
</dbReference>
<dbReference type="GO" id="GO:0003723">
    <property type="term" value="F:RNA binding"/>
    <property type="evidence" value="ECO:0007669"/>
    <property type="project" value="TreeGrafter"/>
</dbReference>
<dbReference type="GO" id="GO:0000466">
    <property type="term" value="P:maturation of 5.8S rRNA from tricistronic rRNA transcript (SSU-rRNA, 5.8S rRNA, LSU-rRNA)"/>
    <property type="evidence" value="ECO:0007669"/>
    <property type="project" value="UniProtKB-UniRule"/>
</dbReference>
<dbReference type="GO" id="GO:0000463">
    <property type="term" value="P:maturation of LSU-rRNA from tricistronic rRNA transcript (SSU-rRNA, 5.8S rRNA, LSU-rRNA)"/>
    <property type="evidence" value="ECO:0000250"/>
    <property type="project" value="UniProtKB"/>
</dbReference>
<dbReference type="CDD" id="cd17709">
    <property type="entry name" value="BRCT_pescadillo_like"/>
    <property type="match status" value="1"/>
</dbReference>
<dbReference type="FunFam" id="3.40.50.10190:FF:000002">
    <property type="entry name" value="Pescadillo homolog"/>
    <property type="match status" value="1"/>
</dbReference>
<dbReference type="Gene3D" id="3.40.50.10190">
    <property type="entry name" value="BRCT domain"/>
    <property type="match status" value="1"/>
</dbReference>
<dbReference type="HAMAP" id="MF_03028">
    <property type="entry name" value="Pescadillo"/>
    <property type="match status" value="1"/>
</dbReference>
<dbReference type="InterPro" id="IPR001357">
    <property type="entry name" value="BRCT_dom"/>
</dbReference>
<dbReference type="InterPro" id="IPR036420">
    <property type="entry name" value="BRCT_dom_sf"/>
</dbReference>
<dbReference type="InterPro" id="IPR010613">
    <property type="entry name" value="PES"/>
</dbReference>
<dbReference type="PANTHER" id="PTHR12221">
    <property type="entry name" value="PESCADILLO - RELATED"/>
    <property type="match status" value="1"/>
</dbReference>
<dbReference type="PANTHER" id="PTHR12221:SF6">
    <property type="entry name" value="PESCADILLO HOMOLOG"/>
    <property type="match status" value="1"/>
</dbReference>
<dbReference type="Pfam" id="PF16589">
    <property type="entry name" value="BRCT_2"/>
    <property type="match status" value="1"/>
</dbReference>
<dbReference type="Pfam" id="PF06732">
    <property type="entry name" value="Pescadillo_N"/>
    <property type="match status" value="1"/>
</dbReference>
<dbReference type="SMART" id="SM00292">
    <property type="entry name" value="BRCT"/>
    <property type="match status" value="1"/>
</dbReference>
<dbReference type="SUPFAM" id="SSF52113">
    <property type="entry name" value="BRCT domain"/>
    <property type="match status" value="1"/>
</dbReference>
<dbReference type="PROSITE" id="PS50172">
    <property type="entry name" value="BRCT"/>
    <property type="match status" value="1"/>
</dbReference>
<protein>
    <recommendedName>
        <fullName evidence="2">Pescadillo homolog</fullName>
    </recommendedName>
</protein>
<name>PESC_DROSE</name>
<sequence>MRRPKKYESGEATQYISRRAALRKLQLSLNDFRRLCILKGVYPREPKHRRRAQKGSSEIKVLYHTKDIRFLLHESIVWTLRDYKIFAKKSNRDRAIKDFRNLKRRLALFPEIKLDHIVKERYPTFIDALKDLDDCLTLLFLFSTFPSLHLIPREQSNLCRRLTIEFLHYVIASKSLRKVFISIKGYYFQAEIKGQKVTWIVPHYYPFKPQSRQEVDFKVMSIFVEFYTIMLGFTNFRLFHGLNLAYPPQFPSSVLQDSEESLKDEASFVSDRIAALNFELLRTDKVQEDEEELDIDMELLEQDGDSKRIIKMKQEAQEVSRLRTLFKGLKFFINREVPREPLVILIRSFGGKVSWDSSIFAGSTYDEGDETITHQIVDRPSISTQYISRDYIQPQWVFDCVNQRQLLPTNKYFIGETLPPHLSPFVDSKRDSYIPPEEKALLDPSLIETHVQSDDDSEDEAQEEEETVDQELLDAQLQLAYQQETAEYKKFGGPDGVNEDEEDPEDDDDNEDDDEEEEELDEKTKRLQEEKQKMSVQSGKVHKVNKRQVHKAEVDEHRLQARMVKPRHRNLFRKLIREKQSKEKEEWLLRKKRRTIEASEKEARKTAKREARKEAAAAAAKASKLGK</sequence>
<reference key="1">
    <citation type="journal article" date="2007" name="Nature">
        <title>Evolution of genes and genomes on the Drosophila phylogeny.</title>
        <authorList>
            <consortium name="Drosophila 12 genomes consortium"/>
        </authorList>
    </citation>
    <scope>NUCLEOTIDE SEQUENCE [LARGE SCALE GENOMIC DNA]</scope>
    <source>
        <strain>Rob3c / Tucson 14021-0248.25</strain>
    </source>
</reference>
<evidence type="ECO:0000250" key="1"/>
<evidence type="ECO:0000255" key="2">
    <source>
        <dbReference type="HAMAP-Rule" id="MF_03028"/>
    </source>
</evidence>
<evidence type="ECO:0000256" key="3">
    <source>
        <dbReference type="SAM" id="MobiDB-lite"/>
    </source>
</evidence>
<feature type="chain" id="PRO_0000370459" description="Pescadillo homolog">
    <location>
        <begin position="1"/>
        <end position="627"/>
    </location>
</feature>
<feature type="domain" description="BRCT" evidence="2">
    <location>
        <begin position="321"/>
        <end position="414"/>
    </location>
</feature>
<feature type="region of interest" description="Disordered" evidence="3">
    <location>
        <begin position="450"/>
        <end position="469"/>
    </location>
</feature>
<feature type="region of interest" description="Disordered" evidence="3">
    <location>
        <begin position="488"/>
        <end position="562"/>
    </location>
</feature>
<feature type="region of interest" description="Disordered" evidence="3">
    <location>
        <begin position="595"/>
        <end position="627"/>
    </location>
</feature>
<feature type="coiled-coil region" evidence="2">
    <location>
        <begin position="507"/>
        <end position="538"/>
    </location>
</feature>
<feature type="coiled-coil region" evidence="2">
    <location>
        <begin position="582"/>
        <end position="625"/>
    </location>
</feature>
<feature type="compositionally biased region" description="Acidic residues" evidence="3">
    <location>
        <begin position="454"/>
        <end position="469"/>
    </location>
</feature>
<feature type="compositionally biased region" description="Acidic residues" evidence="3">
    <location>
        <begin position="497"/>
        <end position="521"/>
    </location>
</feature>
<feature type="compositionally biased region" description="Basic and acidic residues" evidence="3">
    <location>
        <begin position="522"/>
        <end position="533"/>
    </location>
</feature>
<feature type="compositionally biased region" description="Basic residues" evidence="3">
    <location>
        <begin position="540"/>
        <end position="549"/>
    </location>
</feature>
<feature type="compositionally biased region" description="Basic and acidic residues" evidence="3">
    <location>
        <begin position="550"/>
        <end position="559"/>
    </location>
</feature>
<feature type="compositionally biased region" description="Basic and acidic residues" evidence="3">
    <location>
        <begin position="595"/>
        <end position="615"/>
    </location>
</feature>
<feature type="compositionally biased region" description="Low complexity" evidence="3">
    <location>
        <begin position="616"/>
        <end position="627"/>
    </location>
</feature>
<feature type="modified residue" description="Phosphoserine" evidence="1">
    <location>
        <position position="453"/>
    </location>
</feature>
<feature type="modified residue" description="Phosphoserine" evidence="1">
    <location>
        <position position="457"/>
    </location>
</feature>
<organism>
    <name type="scientific">Drosophila sechellia</name>
    <name type="common">Fruit fly</name>
    <dbReference type="NCBI Taxonomy" id="7238"/>
    <lineage>
        <taxon>Eukaryota</taxon>
        <taxon>Metazoa</taxon>
        <taxon>Ecdysozoa</taxon>
        <taxon>Arthropoda</taxon>
        <taxon>Hexapoda</taxon>
        <taxon>Insecta</taxon>
        <taxon>Pterygota</taxon>
        <taxon>Neoptera</taxon>
        <taxon>Endopterygota</taxon>
        <taxon>Diptera</taxon>
        <taxon>Brachycera</taxon>
        <taxon>Muscomorpha</taxon>
        <taxon>Ephydroidea</taxon>
        <taxon>Drosophilidae</taxon>
        <taxon>Drosophila</taxon>
        <taxon>Sophophora</taxon>
    </lineage>
</organism>
<accession>B4HW93</accession>
<comment type="function">
    <text evidence="2">Required for maturation of ribosomal RNAs and formation of the large ribosomal subunit.</text>
</comment>
<comment type="subcellular location">
    <subcellularLocation>
        <location evidence="2">Nucleus</location>
        <location evidence="2">Nucleolus</location>
    </subcellularLocation>
    <subcellularLocation>
        <location evidence="2">Nucleus</location>
        <location evidence="2">Nucleoplasm</location>
    </subcellularLocation>
</comment>
<comment type="similarity">
    <text evidence="2">Belongs to the pescadillo family.</text>
</comment>
<gene>
    <name type="ORF">GM12330</name>
</gene>
<keyword id="KW-0175">Coiled coil</keyword>
<keyword id="KW-0539">Nucleus</keyword>
<keyword id="KW-0597">Phosphoprotein</keyword>
<keyword id="KW-1185">Reference proteome</keyword>
<keyword id="KW-0690">Ribosome biogenesis</keyword>
<keyword id="KW-0698">rRNA processing</keyword>
<proteinExistence type="inferred from homology"/>